<evidence type="ECO:0000250" key="1">
    <source>
        <dbReference type="UniProtKB" id="C3S7F0"/>
    </source>
</evidence>
<evidence type="ECO:0000255" key="2"/>
<evidence type="ECO:0000269" key="3">
    <source>
    </source>
</evidence>
<evidence type="ECO:0000303" key="4">
    <source>
    </source>
</evidence>
<evidence type="ECO:0000305" key="5"/>
<evidence type="ECO:0000305" key="6">
    <source>
    </source>
</evidence>
<evidence type="ECO:0000312" key="7">
    <source>
        <dbReference type="EMBL" id="AIC74543.1"/>
    </source>
</evidence>
<name>OLEG_PINMS</name>
<proteinExistence type="evidence at protein level"/>
<comment type="subcellular location">
    <subcellularLocation>
        <location evidence="3">Lipid droplet</location>
    </subcellularLocation>
    <subcellularLocation>
        <location evidence="2">Membrane</location>
        <topology evidence="2">Multi-pass membrane protein</topology>
    </subcellularLocation>
    <text evidence="5">Surface of oil bodies. Oleosins exist at a monolayer lipid/water interface.</text>
</comment>
<comment type="tissue specificity">
    <text evidence="3">Expressed in megagametophytes (at protein level).</text>
</comment>
<comment type="domain">
    <text evidence="5">The proline-knot motif may be involved in targeting to lipid bodies.</text>
</comment>
<comment type="similarity">
    <text evidence="5">Belongs to the oleosin family.</text>
</comment>
<protein>
    <recommendedName>
        <fullName evidence="4 7">Oleosin G</fullName>
    </recommendedName>
</protein>
<organism>
    <name type="scientific">Pinus massoniana</name>
    <name type="common">Chinese red pine</name>
    <dbReference type="NCBI Taxonomy" id="88730"/>
    <lineage>
        <taxon>Eukaryota</taxon>
        <taxon>Viridiplantae</taxon>
        <taxon>Streptophyta</taxon>
        <taxon>Embryophyta</taxon>
        <taxon>Tracheophyta</taxon>
        <taxon>Spermatophyta</taxon>
        <taxon>Pinopsida</taxon>
        <taxon>Pinidae</taxon>
        <taxon>Conifers I</taxon>
        <taxon>Pinales</taxon>
        <taxon>Pinaceae</taxon>
        <taxon>Pinus</taxon>
        <taxon>Pinus subgen. Pinus</taxon>
    </lineage>
</organism>
<dbReference type="EMBL" id="KJ415242">
    <property type="protein sequence ID" value="AIC74543.1"/>
    <property type="molecule type" value="mRNA"/>
</dbReference>
<dbReference type="SMR" id="A0A060L102"/>
<dbReference type="GO" id="GO:0016020">
    <property type="term" value="C:membrane"/>
    <property type="evidence" value="ECO:0007669"/>
    <property type="project" value="UniProtKB-SubCell"/>
</dbReference>
<dbReference type="GO" id="GO:0012511">
    <property type="term" value="C:monolayer-surrounded lipid storage body"/>
    <property type="evidence" value="ECO:0000314"/>
    <property type="project" value="UniProtKB"/>
</dbReference>
<dbReference type="GO" id="GO:0019915">
    <property type="term" value="P:lipid storage"/>
    <property type="evidence" value="ECO:0007669"/>
    <property type="project" value="TreeGrafter"/>
</dbReference>
<dbReference type="InterPro" id="IPR000136">
    <property type="entry name" value="Oleosin"/>
</dbReference>
<dbReference type="PANTHER" id="PTHR33203:SF4">
    <property type="entry name" value="F27J15.22"/>
    <property type="match status" value="1"/>
</dbReference>
<dbReference type="PANTHER" id="PTHR33203">
    <property type="entry name" value="OLEOSIN"/>
    <property type="match status" value="1"/>
</dbReference>
<dbReference type="Pfam" id="PF01277">
    <property type="entry name" value="Oleosin"/>
    <property type="match status" value="1"/>
</dbReference>
<keyword id="KW-0903">Direct protein sequencing</keyword>
<keyword id="KW-0551">Lipid droplet</keyword>
<keyword id="KW-0472">Membrane</keyword>
<keyword id="KW-0812">Transmembrane</keyword>
<keyword id="KW-1133">Transmembrane helix</keyword>
<feature type="initiator methionine" description="Removed" evidence="1">
    <location>
        <position position="1"/>
    </location>
</feature>
<feature type="chain" id="PRO_0000449962" description="Oleosin G">
    <location>
        <begin position="2"/>
        <end position="138"/>
    </location>
</feature>
<feature type="transmembrane region" description="Helical" evidence="2">
    <location>
        <begin position="14"/>
        <end position="34"/>
    </location>
</feature>
<feature type="transmembrane region" description="Helical" evidence="2">
    <location>
        <begin position="48"/>
        <end position="68"/>
    </location>
</feature>
<feature type="transmembrane region" description="Helical" evidence="2">
    <location>
        <begin position="69"/>
        <end position="89"/>
    </location>
</feature>
<feature type="short sequence motif" description="Proline-knot" evidence="6">
    <location>
        <begin position="47"/>
        <end position="58"/>
    </location>
</feature>
<sequence length="138" mass="14717">MQKIHDHTPNPTQILGFITLFVSGAVLLFLTGLTLTGTVVGLVVLTPVLIFFSPILIPLATVLFVAVAGFLSAGGFGLAALSAISWLYNYIKGRHPPGADQIDYARMRIADTATHVKDYAREYGGYLQSKIQDAAPGA</sequence>
<reference evidence="7" key="1">
    <citation type="journal article" date="2014" name="Plant Physiol. Biochem.">
        <title>Identification of caleosin and two oleosin isoforms in oil bodies of pine megagametophytes.</title>
        <authorList>
            <person name="Pasaribu B."/>
            <person name="Chung T.Y."/>
            <person name="Chen C.S."/>
            <person name="Wang S.L."/>
            <person name="Jiang P.L."/>
            <person name="Tzen J.T."/>
        </authorList>
    </citation>
    <scope>NUCLEOTIDE SEQUENCE [MRNA]</scope>
    <scope>PROTEIN SEQUENCE OF 93-106; 95-106; 109-121 AND 122-130</scope>
    <scope>SUBCELLULAR LOCATION</scope>
    <scope>TISSUE SPECIFICITY</scope>
    <scope>IDENTIFICATION BY MASS SPECTROMETRY</scope>
    <source>
        <tissue evidence="4">Megagametophyte</tissue>
    </source>
</reference>
<accession>A0A060L102</accession>